<gene>
    <name evidence="6" type="primary">IBI1</name>
    <name evidence="10" type="ordered locus">At4g31180</name>
</gene>
<name>SYDC2_ARATH</name>
<dbReference type="EC" id="6.1.1.12" evidence="7"/>
<dbReference type="EMBL" id="AL161578">
    <property type="protein sequence ID" value="CAB79836.1"/>
    <property type="molecule type" value="Genomic_DNA"/>
</dbReference>
<dbReference type="EMBL" id="CP002687">
    <property type="protein sequence ID" value="AEE85872.1"/>
    <property type="molecule type" value="Genomic_DNA"/>
</dbReference>
<dbReference type="EMBL" id="CP002687">
    <property type="protein sequence ID" value="AEE85873.1"/>
    <property type="molecule type" value="Genomic_DNA"/>
</dbReference>
<dbReference type="EMBL" id="AK317607">
    <property type="protein sequence ID" value="BAH20270.1"/>
    <property type="molecule type" value="mRNA"/>
</dbReference>
<dbReference type="EMBL" id="AY072331">
    <property type="protein sequence ID" value="AAL61938.1"/>
    <property type="status" value="ALT_SEQ"/>
    <property type="molecule type" value="mRNA"/>
</dbReference>
<dbReference type="EMBL" id="BT002567">
    <property type="protein sequence ID" value="AAO00927.1"/>
    <property type="molecule type" value="mRNA"/>
</dbReference>
<dbReference type="PIR" id="T10672">
    <property type="entry name" value="T10672"/>
</dbReference>
<dbReference type="RefSeq" id="NP_194847.3">
    <property type="nucleotide sequence ID" value="NM_119268.4"/>
</dbReference>
<dbReference type="RefSeq" id="NP_849558.1">
    <property type="nucleotide sequence ID" value="NM_179227.3"/>
</dbReference>
<dbReference type="SMR" id="Q9M084"/>
<dbReference type="FunCoup" id="Q9M084">
    <property type="interactions" value="4923"/>
</dbReference>
<dbReference type="STRING" id="3702.Q9M084"/>
<dbReference type="iPTMnet" id="Q9M084"/>
<dbReference type="PaxDb" id="3702-AT4G31180.1"/>
<dbReference type="ProteomicsDB" id="233025"/>
<dbReference type="EnsemblPlants" id="AT4G31180.1">
    <property type="protein sequence ID" value="AT4G31180.1"/>
    <property type="gene ID" value="AT4G31180"/>
</dbReference>
<dbReference type="EnsemblPlants" id="AT4G31180.2">
    <property type="protein sequence ID" value="AT4G31180.2"/>
    <property type="gene ID" value="AT4G31180"/>
</dbReference>
<dbReference type="GeneID" id="829246"/>
<dbReference type="Gramene" id="AT4G31180.1">
    <property type="protein sequence ID" value="AT4G31180.1"/>
    <property type="gene ID" value="AT4G31180"/>
</dbReference>
<dbReference type="Gramene" id="AT4G31180.2">
    <property type="protein sequence ID" value="AT4G31180.2"/>
    <property type="gene ID" value="AT4G31180"/>
</dbReference>
<dbReference type="KEGG" id="ath:AT4G31180"/>
<dbReference type="Araport" id="AT4G31180"/>
<dbReference type="TAIR" id="AT4G31180">
    <property type="gene designation" value="IBI1"/>
</dbReference>
<dbReference type="eggNOG" id="KOG0556">
    <property type="taxonomic scope" value="Eukaryota"/>
</dbReference>
<dbReference type="HOGENOM" id="CLU_004553_2_1_1"/>
<dbReference type="InParanoid" id="Q9M084"/>
<dbReference type="OMA" id="WVHEIRD"/>
<dbReference type="OrthoDB" id="372395at2759"/>
<dbReference type="PhylomeDB" id="Q9M084"/>
<dbReference type="CD-CODE" id="4299E36E">
    <property type="entry name" value="Nucleolus"/>
</dbReference>
<dbReference type="PRO" id="PR:Q9M084"/>
<dbReference type="Proteomes" id="UP000006548">
    <property type="component" value="Chromosome 4"/>
</dbReference>
<dbReference type="ExpressionAtlas" id="Q9M084">
    <property type="expression patterns" value="baseline and differential"/>
</dbReference>
<dbReference type="GO" id="GO:0005829">
    <property type="term" value="C:cytosol"/>
    <property type="evidence" value="ECO:0000314"/>
    <property type="project" value="TAIR"/>
</dbReference>
<dbReference type="GO" id="GO:0005783">
    <property type="term" value="C:endoplasmic reticulum"/>
    <property type="evidence" value="ECO:0000314"/>
    <property type="project" value="TAIR"/>
</dbReference>
<dbReference type="GO" id="GO:0005886">
    <property type="term" value="C:plasma membrane"/>
    <property type="evidence" value="ECO:0007005"/>
    <property type="project" value="TAIR"/>
</dbReference>
<dbReference type="GO" id="GO:0004815">
    <property type="term" value="F:aspartate-tRNA ligase activity"/>
    <property type="evidence" value="ECO:0000314"/>
    <property type="project" value="TAIR"/>
</dbReference>
<dbReference type="GO" id="GO:0005524">
    <property type="term" value="F:ATP binding"/>
    <property type="evidence" value="ECO:0007669"/>
    <property type="project" value="UniProtKB-KW"/>
</dbReference>
<dbReference type="GO" id="GO:0003677">
    <property type="term" value="F:DNA binding"/>
    <property type="evidence" value="ECO:0007669"/>
    <property type="project" value="UniProtKB-KW"/>
</dbReference>
<dbReference type="GO" id="GO:0046872">
    <property type="term" value="F:metal ion binding"/>
    <property type="evidence" value="ECO:0007669"/>
    <property type="project" value="UniProtKB-KW"/>
</dbReference>
<dbReference type="GO" id="GO:0006422">
    <property type="term" value="P:aspartyl-tRNA aminoacylation"/>
    <property type="evidence" value="ECO:0007669"/>
    <property type="project" value="InterPro"/>
</dbReference>
<dbReference type="GO" id="GO:0050832">
    <property type="term" value="P:defense response to fungus"/>
    <property type="evidence" value="ECO:0000315"/>
    <property type="project" value="TAIR"/>
</dbReference>
<dbReference type="CDD" id="cd04320">
    <property type="entry name" value="AspRS_cyto_N"/>
    <property type="match status" value="1"/>
</dbReference>
<dbReference type="CDD" id="cd00776">
    <property type="entry name" value="AsxRS_core"/>
    <property type="match status" value="1"/>
</dbReference>
<dbReference type="FunFam" id="3.30.930.10:FF:000013">
    <property type="entry name" value="Aspartate--tRNA ligase, cytoplasmic"/>
    <property type="match status" value="1"/>
</dbReference>
<dbReference type="FunFam" id="2.40.50.140:FF:000132">
    <property type="entry name" value="Aspartyl-tRNA synthetase, cytoplasmic"/>
    <property type="match status" value="1"/>
</dbReference>
<dbReference type="Gene3D" id="3.30.930.10">
    <property type="entry name" value="Bira Bifunctional Protein, Domain 2"/>
    <property type="match status" value="1"/>
</dbReference>
<dbReference type="Gene3D" id="2.40.50.140">
    <property type="entry name" value="Nucleic acid-binding proteins"/>
    <property type="match status" value="1"/>
</dbReference>
<dbReference type="HAMAP" id="MF_02075">
    <property type="entry name" value="Asp_tRNA_synth_type2"/>
    <property type="match status" value="1"/>
</dbReference>
<dbReference type="InterPro" id="IPR004364">
    <property type="entry name" value="Aa-tRNA-synt_II"/>
</dbReference>
<dbReference type="InterPro" id="IPR006195">
    <property type="entry name" value="aa-tRNA-synth_II"/>
</dbReference>
<dbReference type="InterPro" id="IPR045864">
    <property type="entry name" value="aa-tRNA-synth_II/BPL/LPL"/>
</dbReference>
<dbReference type="InterPro" id="IPR004523">
    <property type="entry name" value="Asp-tRNA_synthase_2"/>
</dbReference>
<dbReference type="InterPro" id="IPR002312">
    <property type="entry name" value="Asp/Asn-tRNA-synth_IIb"/>
</dbReference>
<dbReference type="InterPro" id="IPR012340">
    <property type="entry name" value="NA-bd_OB-fold"/>
</dbReference>
<dbReference type="InterPro" id="IPR004365">
    <property type="entry name" value="NA-bd_OB_tRNA"/>
</dbReference>
<dbReference type="NCBIfam" id="TIGR00458">
    <property type="entry name" value="aspS_nondisc"/>
    <property type="match status" value="1"/>
</dbReference>
<dbReference type="NCBIfam" id="NF003483">
    <property type="entry name" value="PRK05159.1"/>
    <property type="match status" value="1"/>
</dbReference>
<dbReference type="PANTHER" id="PTHR43450:SF1">
    <property type="entry name" value="ASPARTATE--TRNA LIGASE, CYTOPLASMIC"/>
    <property type="match status" value="1"/>
</dbReference>
<dbReference type="PANTHER" id="PTHR43450">
    <property type="entry name" value="ASPARTYL-TRNA SYNTHETASE"/>
    <property type="match status" value="1"/>
</dbReference>
<dbReference type="Pfam" id="PF00152">
    <property type="entry name" value="tRNA-synt_2"/>
    <property type="match status" value="1"/>
</dbReference>
<dbReference type="Pfam" id="PF01336">
    <property type="entry name" value="tRNA_anti-codon"/>
    <property type="match status" value="1"/>
</dbReference>
<dbReference type="PRINTS" id="PR01042">
    <property type="entry name" value="TRNASYNTHASP"/>
</dbReference>
<dbReference type="SUPFAM" id="SSF55681">
    <property type="entry name" value="Class II aaRS and biotin synthetases"/>
    <property type="match status" value="1"/>
</dbReference>
<dbReference type="SUPFAM" id="SSF50249">
    <property type="entry name" value="Nucleic acid-binding proteins"/>
    <property type="match status" value="1"/>
</dbReference>
<dbReference type="PROSITE" id="PS50862">
    <property type="entry name" value="AA_TRNA_LIGASE_II"/>
    <property type="match status" value="1"/>
</dbReference>
<comment type="function">
    <text evidence="2 5">Catalyzes the specific attachment of an amino acid to its cognate tRNA in a 2 step reaction: the amino acid (AA) is first activated by ATP to form AA-AMP and then transferred to the acceptor end of the tRNA (By similarity). Involved in the perception of beta-aminobutyric acid (BABA) and required for BABA priming effect in disease resistance (PubMed:24776930).</text>
</comment>
<comment type="catalytic activity">
    <reaction evidence="7">
        <text>tRNA(Asp) + L-aspartate + ATP = L-aspartyl-tRNA(Asp) + AMP + diphosphate</text>
        <dbReference type="Rhea" id="RHEA:19649"/>
        <dbReference type="Rhea" id="RHEA-COMP:9660"/>
        <dbReference type="Rhea" id="RHEA-COMP:9678"/>
        <dbReference type="ChEBI" id="CHEBI:29991"/>
        <dbReference type="ChEBI" id="CHEBI:30616"/>
        <dbReference type="ChEBI" id="CHEBI:33019"/>
        <dbReference type="ChEBI" id="CHEBI:78442"/>
        <dbReference type="ChEBI" id="CHEBI:78516"/>
        <dbReference type="ChEBI" id="CHEBI:456215"/>
        <dbReference type="EC" id="6.1.1.12"/>
    </reaction>
</comment>
<comment type="subcellular location">
    <subcellularLocation>
        <location evidence="5 8 9">Cytoplasm</location>
        <location evidence="5 8 9">Cytosol</location>
    </subcellularLocation>
    <subcellularLocation>
        <location evidence="5">Endoplasmic reticulum</location>
    </subcellularLocation>
</comment>
<comment type="similarity">
    <text evidence="7">Belongs to the class-II aminoacyl-tRNA synthetase family. Type 2 subfamily.</text>
</comment>
<comment type="sequence caution" evidence="7">
    <conflict type="erroneous initiation">
        <sequence resource="EMBL-CDS" id="AAL61938"/>
    </conflict>
    <text>Truncated N-terminus.</text>
</comment>
<protein>
    <recommendedName>
        <fullName evidence="7">Aspartate--tRNA ligase 2, cytoplasmic</fullName>
        <ecNumber evidence="7">6.1.1.12</ecNumber>
    </recommendedName>
    <alternativeName>
        <fullName evidence="7">Aspartyl-tRNA synthetase</fullName>
        <shortName evidence="7">AspRS</shortName>
    </alternativeName>
    <alternativeName>
        <fullName evidence="6">Protein IMPAIRED IN BABA-INDUCED DISEASE IMMUNITY 1</fullName>
    </alternativeName>
</protein>
<reference key="1">
    <citation type="journal article" date="1999" name="Nature">
        <title>Sequence and analysis of chromosome 4 of the plant Arabidopsis thaliana.</title>
        <authorList>
            <person name="Mayer K.F.X."/>
            <person name="Schueller C."/>
            <person name="Wambutt R."/>
            <person name="Murphy G."/>
            <person name="Volckaert G."/>
            <person name="Pohl T."/>
            <person name="Duesterhoeft A."/>
            <person name="Stiekema W."/>
            <person name="Entian K.-D."/>
            <person name="Terryn N."/>
            <person name="Harris B."/>
            <person name="Ansorge W."/>
            <person name="Brandt P."/>
            <person name="Grivell L.A."/>
            <person name="Rieger M."/>
            <person name="Weichselgartner M."/>
            <person name="de Simone V."/>
            <person name="Obermaier B."/>
            <person name="Mache R."/>
            <person name="Mueller M."/>
            <person name="Kreis M."/>
            <person name="Delseny M."/>
            <person name="Puigdomenech P."/>
            <person name="Watson M."/>
            <person name="Schmidtheini T."/>
            <person name="Reichert B."/>
            <person name="Portetelle D."/>
            <person name="Perez-Alonso M."/>
            <person name="Boutry M."/>
            <person name="Bancroft I."/>
            <person name="Vos P."/>
            <person name="Hoheisel J."/>
            <person name="Zimmermann W."/>
            <person name="Wedler H."/>
            <person name="Ridley P."/>
            <person name="Langham S.-A."/>
            <person name="McCullagh B."/>
            <person name="Bilham L."/>
            <person name="Robben J."/>
            <person name="van der Schueren J."/>
            <person name="Grymonprez B."/>
            <person name="Chuang Y.-J."/>
            <person name="Vandenbussche F."/>
            <person name="Braeken M."/>
            <person name="Weltjens I."/>
            <person name="Voet M."/>
            <person name="Bastiaens I."/>
            <person name="Aert R."/>
            <person name="Defoor E."/>
            <person name="Weitzenegger T."/>
            <person name="Bothe G."/>
            <person name="Ramsperger U."/>
            <person name="Hilbert H."/>
            <person name="Braun M."/>
            <person name="Holzer E."/>
            <person name="Brandt A."/>
            <person name="Peters S."/>
            <person name="van Staveren M."/>
            <person name="Dirkse W."/>
            <person name="Mooijman P."/>
            <person name="Klein Lankhorst R."/>
            <person name="Rose M."/>
            <person name="Hauf J."/>
            <person name="Koetter P."/>
            <person name="Berneiser S."/>
            <person name="Hempel S."/>
            <person name="Feldpausch M."/>
            <person name="Lamberth S."/>
            <person name="Van den Daele H."/>
            <person name="De Keyser A."/>
            <person name="Buysshaert C."/>
            <person name="Gielen J."/>
            <person name="Villarroel R."/>
            <person name="De Clercq R."/>
            <person name="van Montagu M."/>
            <person name="Rogers J."/>
            <person name="Cronin A."/>
            <person name="Quail M.A."/>
            <person name="Bray-Allen S."/>
            <person name="Clark L."/>
            <person name="Doggett J."/>
            <person name="Hall S."/>
            <person name="Kay M."/>
            <person name="Lennard N."/>
            <person name="McLay K."/>
            <person name="Mayes R."/>
            <person name="Pettett A."/>
            <person name="Rajandream M.A."/>
            <person name="Lyne M."/>
            <person name="Benes V."/>
            <person name="Rechmann S."/>
            <person name="Borkova D."/>
            <person name="Bloecker H."/>
            <person name="Scharfe M."/>
            <person name="Grimm M."/>
            <person name="Loehnert T.-H."/>
            <person name="Dose S."/>
            <person name="de Haan M."/>
            <person name="Maarse A.C."/>
            <person name="Schaefer M."/>
            <person name="Mueller-Auer S."/>
            <person name="Gabel C."/>
            <person name="Fuchs M."/>
            <person name="Fartmann B."/>
            <person name="Granderath K."/>
            <person name="Dauner D."/>
            <person name="Herzl A."/>
            <person name="Neumann S."/>
            <person name="Argiriou A."/>
            <person name="Vitale D."/>
            <person name="Liguori R."/>
            <person name="Piravandi E."/>
            <person name="Massenet O."/>
            <person name="Quigley F."/>
            <person name="Clabauld G."/>
            <person name="Muendlein A."/>
            <person name="Felber R."/>
            <person name="Schnabl S."/>
            <person name="Hiller R."/>
            <person name="Schmidt W."/>
            <person name="Lecharny A."/>
            <person name="Aubourg S."/>
            <person name="Chefdor F."/>
            <person name="Cooke R."/>
            <person name="Berger C."/>
            <person name="Monfort A."/>
            <person name="Casacuberta E."/>
            <person name="Gibbons T."/>
            <person name="Weber N."/>
            <person name="Vandenbol M."/>
            <person name="Bargues M."/>
            <person name="Terol J."/>
            <person name="Torres A."/>
            <person name="Perez-Perez A."/>
            <person name="Purnelle B."/>
            <person name="Bent E."/>
            <person name="Johnson S."/>
            <person name="Tacon D."/>
            <person name="Jesse T."/>
            <person name="Heijnen L."/>
            <person name="Schwarz S."/>
            <person name="Scholler P."/>
            <person name="Heber S."/>
            <person name="Francs P."/>
            <person name="Bielke C."/>
            <person name="Frishman D."/>
            <person name="Haase D."/>
            <person name="Lemcke K."/>
            <person name="Mewes H.-W."/>
            <person name="Stocker S."/>
            <person name="Zaccaria P."/>
            <person name="Bevan M."/>
            <person name="Wilson R.K."/>
            <person name="de la Bastide M."/>
            <person name="Habermann K."/>
            <person name="Parnell L."/>
            <person name="Dedhia N."/>
            <person name="Gnoj L."/>
            <person name="Schutz K."/>
            <person name="Huang E."/>
            <person name="Spiegel L."/>
            <person name="Sekhon M."/>
            <person name="Murray J."/>
            <person name="Sheet P."/>
            <person name="Cordes M."/>
            <person name="Abu-Threideh J."/>
            <person name="Stoneking T."/>
            <person name="Kalicki J."/>
            <person name="Graves T."/>
            <person name="Harmon G."/>
            <person name="Edwards J."/>
            <person name="Latreille P."/>
            <person name="Courtney L."/>
            <person name="Cloud J."/>
            <person name="Abbott A."/>
            <person name="Scott K."/>
            <person name="Johnson D."/>
            <person name="Minx P."/>
            <person name="Bentley D."/>
            <person name="Fulton B."/>
            <person name="Miller N."/>
            <person name="Greco T."/>
            <person name="Kemp K."/>
            <person name="Kramer J."/>
            <person name="Fulton L."/>
            <person name="Mardis E."/>
            <person name="Dante M."/>
            <person name="Pepin K."/>
            <person name="Hillier L.W."/>
            <person name="Nelson J."/>
            <person name="Spieth J."/>
            <person name="Ryan E."/>
            <person name="Andrews S."/>
            <person name="Geisel C."/>
            <person name="Layman D."/>
            <person name="Du H."/>
            <person name="Ali J."/>
            <person name="Berghoff A."/>
            <person name="Jones K."/>
            <person name="Drone K."/>
            <person name="Cotton M."/>
            <person name="Joshu C."/>
            <person name="Antonoiu B."/>
            <person name="Zidanic M."/>
            <person name="Strong C."/>
            <person name="Sun H."/>
            <person name="Lamar B."/>
            <person name="Yordan C."/>
            <person name="Ma P."/>
            <person name="Zhong J."/>
            <person name="Preston R."/>
            <person name="Vil D."/>
            <person name="Shekher M."/>
            <person name="Matero A."/>
            <person name="Shah R."/>
            <person name="Swaby I.K."/>
            <person name="O'Shaughnessy A."/>
            <person name="Rodriguez M."/>
            <person name="Hoffman J."/>
            <person name="Till S."/>
            <person name="Granat S."/>
            <person name="Shohdy N."/>
            <person name="Hasegawa A."/>
            <person name="Hameed A."/>
            <person name="Lodhi M."/>
            <person name="Johnson A."/>
            <person name="Chen E."/>
            <person name="Marra M.A."/>
            <person name="Martienssen R."/>
            <person name="McCombie W.R."/>
        </authorList>
    </citation>
    <scope>NUCLEOTIDE SEQUENCE [LARGE SCALE GENOMIC DNA]</scope>
    <source>
        <strain>cv. Columbia</strain>
    </source>
</reference>
<reference key="2">
    <citation type="journal article" date="2017" name="Plant J.">
        <title>Araport11: a complete reannotation of the Arabidopsis thaliana reference genome.</title>
        <authorList>
            <person name="Cheng C.Y."/>
            <person name="Krishnakumar V."/>
            <person name="Chan A.P."/>
            <person name="Thibaud-Nissen F."/>
            <person name="Schobel S."/>
            <person name="Town C.D."/>
        </authorList>
    </citation>
    <scope>GENOME REANNOTATION</scope>
    <source>
        <strain>cv. Columbia</strain>
    </source>
</reference>
<reference key="3">
    <citation type="journal article" date="2009" name="DNA Res.">
        <title>Analysis of multiple occurrences of alternative splicing events in Arabidopsis thaliana using novel sequenced full-length cDNAs.</title>
        <authorList>
            <person name="Iida K."/>
            <person name="Fukami-Kobayashi K."/>
            <person name="Toyoda A."/>
            <person name="Sakaki Y."/>
            <person name="Kobayashi M."/>
            <person name="Seki M."/>
            <person name="Shinozaki K."/>
        </authorList>
    </citation>
    <scope>NUCLEOTIDE SEQUENCE [LARGE SCALE MRNA]</scope>
    <source>
        <strain>cv. Columbia</strain>
    </source>
</reference>
<reference key="4">
    <citation type="journal article" date="2003" name="Science">
        <title>Empirical analysis of transcriptional activity in the Arabidopsis genome.</title>
        <authorList>
            <person name="Yamada K."/>
            <person name="Lim J."/>
            <person name="Dale J.M."/>
            <person name="Chen H."/>
            <person name="Shinn P."/>
            <person name="Palm C.J."/>
            <person name="Southwick A.M."/>
            <person name="Wu H.C."/>
            <person name="Kim C.J."/>
            <person name="Nguyen M."/>
            <person name="Pham P.K."/>
            <person name="Cheuk R.F."/>
            <person name="Karlin-Newmann G."/>
            <person name="Liu S.X."/>
            <person name="Lam B."/>
            <person name="Sakano H."/>
            <person name="Wu T."/>
            <person name="Yu G."/>
            <person name="Miranda M."/>
            <person name="Quach H.L."/>
            <person name="Tripp M."/>
            <person name="Chang C.H."/>
            <person name="Lee J.M."/>
            <person name="Toriumi M.J."/>
            <person name="Chan M.M."/>
            <person name="Tang C.C."/>
            <person name="Onodera C.S."/>
            <person name="Deng J.M."/>
            <person name="Akiyama K."/>
            <person name="Ansari Y."/>
            <person name="Arakawa T."/>
            <person name="Banh J."/>
            <person name="Banno F."/>
            <person name="Bowser L."/>
            <person name="Brooks S.Y."/>
            <person name="Carninci P."/>
            <person name="Chao Q."/>
            <person name="Choy N."/>
            <person name="Enju A."/>
            <person name="Goldsmith A.D."/>
            <person name="Gurjal M."/>
            <person name="Hansen N.F."/>
            <person name="Hayashizaki Y."/>
            <person name="Johnson-Hopson C."/>
            <person name="Hsuan V.W."/>
            <person name="Iida K."/>
            <person name="Karnes M."/>
            <person name="Khan S."/>
            <person name="Koesema E."/>
            <person name="Ishida J."/>
            <person name="Jiang P.X."/>
            <person name="Jones T."/>
            <person name="Kawai J."/>
            <person name="Kamiya A."/>
            <person name="Meyers C."/>
            <person name="Nakajima M."/>
            <person name="Narusaka M."/>
            <person name="Seki M."/>
            <person name="Sakurai T."/>
            <person name="Satou M."/>
            <person name="Tamse R."/>
            <person name="Vaysberg M."/>
            <person name="Wallender E.K."/>
            <person name="Wong C."/>
            <person name="Yamamura Y."/>
            <person name="Yuan S."/>
            <person name="Shinozaki K."/>
            <person name="Davis R.W."/>
            <person name="Theologis A."/>
            <person name="Ecker J.R."/>
        </authorList>
    </citation>
    <scope>NUCLEOTIDE SEQUENCE [LARGE SCALE MRNA] OF 107-558 AND 154-558</scope>
    <source>
        <strain>cv. Columbia</strain>
    </source>
</reference>
<reference key="5">
    <citation type="journal article" date="2005" name="Plant J.">
        <title>Requirement of aminoacyl-tRNA synthetases for gametogenesis and embryo development in Arabidopsis.</title>
        <authorList>
            <person name="Berg M."/>
            <person name="Rogers R."/>
            <person name="Muralla R."/>
            <person name="Meinke D."/>
        </authorList>
    </citation>
    <scope>SUBCELLULAR LOCATION</scope>
</reference>
<reference key="6">
    <citation type="journal article" date="2005" name="Proc. Natl. Acad. Sci. U.S.A.">
        <title>Dual targeting is the rule for organellar aminoacyl-tRNA synthetases in Arabidopsis thaliana.</title>
        <authorList>
            <person name="Duchene A.-M."/>
            <person name="Giritch A."/>
            <person name="Hoffmann B."/>
            <person name="Cognat V."/>
            <person name="Lancelin D."/>
            <person name="Peeters N.M."/>
            <person name="Zaepfel M."/>
            <person name="Marechal-Drouard L."/>
            <person name="Small I.D."/>
        </authorList>
    </citation>
    <scope>SUBCELLULAR LOCATION</scope>
</reference>
<reference key="7">
    <citation type="journal article" date="2012" name="Mol. Cell. Proteomics">
        <title>Comparative large-scale characterisation of plant vs. mammal proteins reveals similar and idiosyncratic N-alpha acetylation features.</title>
        <authorList>
            <person name="Bienvenut W.V."/>
            <person name="Sumpton D."/>
            <person name="Martinez A."/>
            <person name="Lilla S."/>
            <person name="Espagne C."/>
            <person name="Meinnel T."/>
            <person name="Giglione C."/>
        </authorList>
    </citation>
    <scope>ACETYLATION [LARGE SCALE ANALYSIS] AT SER-2</scope>
    <scope>CLEAVAGE OF INITIATOR METHIONINE [LARGE SCALE ANALYSIS]</scope>
    <scope>IDENTIFICATION BY MASS SPECTROMETRY [LARGE SCALE ANALYSIS]</scope>
</reference>
<reference key="8">
    <citation type="journal article" date="2014" name="Nat. Chem. Biol.">
        <title>Plant perception of beta-aminobutyric acid is mediated by an aspartyl-tRNA synthetase.</title>
        <authorList>
            <person name="Luna E."/>
            <person name="van Hulten M."/>
            <person name="Zhang Y."/>
            <person name="Berkowitz O."/>
            <person name="Lopez A."/>
            <person name="Petriacq P."/>
            <person name="Sellwood M.A."/>
            <person name="Chen B."/>
            <person name="Burrell M."/>
            <person name="van de Meene A."/>
            <person name="Pieterse C.M."/>
            <person name="Flors V."/>
            <person name="Ton J."/>
        </authorList>
    </citation>
    <scope>FUNCTION</scope>
    <scope>SUBCELLULAR LOCATION</scope>
</reference>
<sequence>MSSESEIPPLSSSTAAAEESGEKTSKKAAKKEAAKLEKLRRRQEQEEATRRTASISLEENDEFSNNYGDVTLTELQSSADPKAGKWIEAVEGKEWTDVSDLVEEMLESEVLIRGRVHTNRPTSNKLGFVVLRESGSTVQCVVSQSEKTKVGANMVKYLKQLSRESFVDVIGVVTLPKEPLTGTTQQVEIQVRKVYCINKSLAKLPLSVEDAARSEADIEASLQTPSPAARVNQDTRLNYRVLDLRTPANQAIFQLQYEVEYAFREKLRFKNFVGIHTPKLMAGSSEGGSAVFRLEYKGQPACLAQSPQLHKQMAICGDLRRVFEVGPVFRAEDSFTHRHLCEFVGLDVEMEIRKHYSEIMDLVDELFVFIFTSLNERCKKELQAVGKQYPFEPLKFLPKTLRLTFEEGVQMLKEAGVEVDPLGDLNTESERKLGQLVLEKYNTEFYILHRYPKAVRPFYTMTCADNPLYSNSFDVFIRGEEIISGAQRVHIPEVLEQRAGECGIDVKTISTYIDSFRYGAPLHGGFGVGLERVVMLFCALNNIRKTSLFPRDPQRLSP</sequence>
<evidence type="ECO:0000250" key="1"/>
<evidence type="ECO:0000250" key="2">
    <source>
        <dbReference type="UniProtKB" id="P14868"/>
    </source>
</evidence>
<evidence type="ECO:0000255" key="3"/>
<evidence type="ECO:0000256" key="4">
    <source>
        <dbReference type="SAM" id="MobiDB-lite"/>
    </source>
</evidence>
<evidence type="ECO:0000269" key="5">
    <source>
    </source>
</evidence>
<evidence type="ECO:0000303" key="6">
    <source>
    </source>
</evidence>
<evidence type="ECO:0000305" key="7"/>
<evidence type="ECO:0000305" key="8">
    <source>
    </source>
</evidence>
<evidence type="ECO:0000305" key="9">
    <source>
    </source>
</evidence>
<evidence type="ECO:0000312" key="10">
    <source>
        <dbReference type="Araport" id="AT4G31180"/>
    </source>
</evidence>
<evidence type="ECO:0007744" key="11">
    <source>
    </source>
</evidence>
<proteinExistence type="evidence at protein level"/>
<feature type="initiator methionine" description="Removed" evidence="11">
    <location>
        <position position="1"/>
    </location>
</feature>
<feature type="chain" id="PRO_0000433560" description="Aspartate--tRNA ligase 2, cytoplasmic">
    <location>
        <begin position="2"/>
        <end position="558"/>
    </location>
</feature>
<feature type="DNA-binding region" description="OB" evidence="3">
    <location>
        <begin position="110"/>
        <end position="195"/>
    </location>
</feature>
<feature type="region of interest" description="Disordered" evidence="4">
    <location>
        <begin position="1"/>
        <end position="57"/>
    </location>
</feature>
<feature type="region of interest" description="Aspartate" evidence="1">
    <location>
        <begin position="308"/>
        <end position="311"/>
    </location>
</feature>
<feature type="compositionally biased region" description="Low complexity" evidence="4">
    <location>
        <begin position="1"/>
        <end position="18"/>
    </location>
</feature>
<feature type="compositionally biased region" description="Basic and acidic residues" evidence="4">
    <location>
        <begin position="20"/>
        <end position="50"/>
    </location>
</feature>
<feature type="binding site" evidence="1">
    <location>
        <position position="286"/>
    </location>
    <ligand>
        <name>L-aspartate</name>
        <dbReference type="ChEBI" id="CHEBI:29991"/>
    </ligand>
</feature>
<feature type="binding site" evidence="1">
    <location>
        <begin position="330"/>
        <end position="332"/>
    </location>
    <ligand>
        <name>ATP</name>
        <dbReference type="ChEBI" id="CHEBI:30616"/>
    </ligand>
</feature>
<feature type="binding site" evidence="1">
    <location>
        <position position="330"/>
    </location>
    <ligand>
        <name>L-aspartate</name>
        <dbReference type="ChEBI" id="CHEBI:29991"/>
    </ligand>
</feature>
<feature type="binding site" evidence="1">
    <location>
        <begin position="338"/>
        <end position="340"/>
    </location>
    <ligand>
        <name>ATP</name>
        <dbReference type="ChEBI" id="CHEBI:30616"/>
    </ligand>
</feature>
<feature type="binding site" evidence="1">
    <location>
        <position position="481"/>
    </location>
    <ligand>
        <name>ATP</name>
        <dbReference type="ChEBI" id="CHEBI:30616"/>
    </ligand>
</feature>
<feature type="binding site" evidence="1">
    <location>
        <position position="481"/>
    </location>
    <ligand>
        <name>Mg(2+)</name>
        <dbReference type="ChEBI" id="CHEBI:18420"/>
        <label>2</label>
    </ligand>
</feature>
<feature type="binding site" evidence="1">
    <location>
        <position position="481"/>
    </location>
    <ligand>
        <name>Mg(2+)</name>
        <dbReference type="ChEBI" id="CHEBI:18420"/>
        <label>3</label>
    </ligand>
</feature>
<feature type="binding site" evidence="1">
    <location>
        <position position="484"/>
    </location>
    <ligand>
        <name>L-aspartate</name>
        <dbReference type="ChEBI" id="CHEBI:29991"/>
    </ligand>
</feature>
<feature type="binding site" evidence="1">
    <location>
        <position position="484"/>
    </location>
    <ligand>
        <name>Mg(2+)</name>
        <dbReference type="ChEBI" id="CHEBI:18420"/>
        <label>2</label>
    </ligand>
</feature>
<feature type="binding site" evidence="1">
    <location>
        <position position="488"/>
    </location>
    <ligand>
        <name>L-aspartate</name>
        <dbReference type="ChEBI" id="CHEBI:29991"/>
    </ligand>
</feature>
<feature type="binding site" evidence="1">
    <location>
        <begin position="529"/>
        <end position="532"/>
    </location>
    <ligand>
        <name>ATP</name>
        <dbReference type="ChEBI" id="CHEBI:30616"/>
    </ligand>
</feature>
<feature type="modified residue" description="N-acetylserine" evidence="11">
    <location>
        <position position="2"/>
    </location>
</feature>
<organism>
    <name type="scientific">Arabidopsis thaliana</name>
    <name type="common">Mouse-ear cress</name>
    <dbReference type="NCBI Taxonomy" id="3702"/>
    <lineage>
        <taxon>Eukaryota</taxon>
        <taxon>Viridiplantae</taxon>
        <taxon>Streptophyta</taxon>
        <taxon>Embryophyta</taxon>
        <taxon>Tracheophyta</taxon>
        <taxon>Spermatophyta</taxon>
        <taxon>Magnoliopsida</taxon>
        <taxon>eudicotyledons</taxon>
        <taxon>Gunneridae</taxon>
        <taxon>Pentapetalae</taxon>
        <taxon>rosids</taxon>
        <taxon>malvids</taxon>
        <taxon>Brassicales</taxon>
        <taxon>Brassicaceae</taxon>
        <taxon>Camelineae</taxon>
        <taxon>Arabidopsis</taxon>
    </lineage>
</organism>
<keyword id="KW-0007">Acetylation</keyword>
<keyword id="KW-0030">Aminoacyl-tRNA synthetase</keyword>
<keyword id="KW-0067">ATP-binding</keyword>
<keyword id="KW-0963">Cytoplasm</keyword>
<keyword id="KW-0238">DNA-binding</keyword>
<keyword id="KW-0256">Endoplasmic reticulum</keyword>
<keyword id="KW-0436">Ligase</keyword>
<keyword id="KW-0460">Magnesium</keyword>
<keyword id="KW-0479">Metal-binding</keyword>
<keyword id="KW-0547">Nucleotide-binding</keyword>
<keyword id="KW-0648">Protein biosynthesis</keyword>
<keyword id="KW-1185">Reference proteome</keyword>
<accession>Q9M084</accession>
<accession>Q8VYA0</accession>